<evidence type="ECO:0000255" key="1">
    <source>
        <dbReference type="HAMAP-Rule" id="MF_00267"/>
    </source>
</evidence>
<reference key="1">
    <citation type="submission" date="2006-08" db="EMBL/GenBank/DDBJ databases">
        <title>Complete sequence of chromosome 1 of Burkholderia cepacia AMMD.</title>
        <authorList>
            <person name="Copeland A."/>
            <person name="Lucas S."/>
            <person name="Lapidus A."/>
            <person name="Barry K."/>
            <person name="Detter J.C."/>
            <person name="Glavina del Rio T."/>
            <person name="Hammon N."/>
            <person name="Israni S."/>
            <person name="Pitluck S."/>
            <person name="Bruce D."/>
            <person name="Chain P."/>
            <person name="Malfatti S."/>
            <person name="Shin M."/>
            <person name="Vergez L."/>
            <person name="Schmutz J."/>
            <person name="Larimer F."/>
            <person name="Land M."/>
            <person name="Hauser L."/>
            <person name="Kyrpides N."/>
            <person name="Kim E."/>
            <person name="Parke J."/>
            <person name="Coenye T."/>
            <person name="Konstantinidis K."/>
            <person name="Ramette A."/>
            <person name="Tiedje J."/>
            <person name="Richardson P."/>
        </authorList>
    </citation>
    <scope>NUCLEOTIDE SEQUENCE [LARGE SCALE GENOMIC DNA]</scope>
    <source>
        <strain>ATCC BAA-244 / DSM 16087 / CCUG 44356 / LMG 19182 / AMMD</strain>
    </source>
</reference>
<protein>
    <recommendedName>
        <fullName evidence="1">Probable septum site-determining protein MinC</fullName>
    </recommendedName>
</protein>
<sequence length="254" mass="27410">MSLKKSPFFELRSGSVDTLLFTVKTTDLDALRTELVKRFEATPEFFADDVVAIDVRRLADGERVALADIRQMLNDVRMRPVGVVALATQGWAGEAGLPLLEARDRRVSAAKPADEAEPAPVVAEAVAAAEPAPEPAPTQISASGQTLVIDRPLRSGQQIYAKGDLVVLAPVSHGAEIIAEGNIHIYAPLRGRALAGVHGNHDARIFCTCLEPELISIAGIYRTTENPLPADILGKAVQIRLEEEKLMIEPLRLT</sequence>
<proteinExistence type="inferred from homology"/>
<feature type="chain" id="PRO_1000047809" description="Probable septum site-determining protein MinC">
    <location>
        <begin position="1"/>
        <end position="254"/>
    </location>
</feature>
<keyword id="KW-0131">Cell cycle</keyword>
<keyword id="KW-0132">Cell division</keyword>
<keyword id="KW-0717">Septation</keyword>
<gene>
    <name evidence="1" type="primary">minC</name>
    <name type="ordered locus">Bamb_0843</name>
</gene>
<dbReference type="EMBL" id="CP000440">
    <property type="protein sequence ID" value="ABI86402.1"/>
    <property type="molecule type" value="Genomic_DNA"/>
</dbReference>
<dbReference type="RefSeq" id="WP_011656211.1">
    <property type="nucleotide sequence ID" value="NC_008390.1"/>
</dbReference>
<dbReference type="SMR" id="Q0BHH1"/>
<dbReference type="GeneID" id="93083749"/>
<dbReference type="KEGG" id="bam:Bamb_0843"/>
<dbReference type="PATRIC" id="fig|339670.21.peg.740"/>
<dbReference type="eggNOG" id="COG0850">
    <property type="taxonomic scope" value="Bacteria"/>
</dbReference>
<dbReference type="Proteomes" id="UP000000662">
    <property type="component" value="Chromosome 1"/>
</dbReference>
<dbReference type="GO" id="GO:0000902">
    <property type="term" value="P:cell morphogenesis"/>
    <property type="evidence" value="ECO:0007669"/>
    <property type="project" value="InterPro"/>
</dbReference>
<dbReference type="GO" id="GO:0000917">
    <property type="term" value="P:division septum assembly"/>
    <property type="evidence" value="ECO:0007669"/>
    <property type="project" value="UniProtKB-KW"/>
</dbReference>
<dbReference type="GO" id="GO:0051302">
    <property type="term" value="P:regulation of cell division"/>
    <property type="evidence" value="ECO:0007669"/>
    <property type="project" value="InterPro"/>
</dbReference>
<dbReference type="GO" id="GO:1901891">
    <property type="term" value="P:regulation of cell septum assembly"/>
    <property type="evidence" value="ECO:0007669"/>
    <property type="project" value="InterPro"/>
</dbReference>
<dbReference type="Gene3D" id="2.160.20.70">
    <property type="match status" value="1"/>
</dbReference>
<dbReference type="Gene3D" id="3.30.70.260">
    <property type="match status" value="1"/>
</dbReference>
<dbReference type="HAMAP" id="MF_00267">
    <property type="entry name" value="MinC"/>
    <property type="match status" value="1"/>
</dbReference>
<dbReference type="InterPro" id="IPR016098">
    <property type="entry name" value="CAP/MinC_C"/>
</dbReference>
<dbReference type="InterPro" id="IPR013033">
    <property type="entry name" value="MinC"/>
</dbReference>
<dbReference type="InterPro" id="IPR036145">
    <property type="entry name" value="MinC_C_sf"/>
</dbReference>
<dbReference type="InterPro" id="IPR007874">
    <property type="entry name" value="MinC_N"/>
</dbReference>
<dbReference type="InterPro" id="IPR005526">
    <property type="entry name" value="Septum_form_inhib_MinC_C"/>
</dbReference>
<dbReference type="NCBIfam" id="TIGR01222">
    <property type="entry name" value="minC"/>
    <property type="match status" value="1"/>
</dbReference>
<dbReference type="PANTHER" id="PTHR34108">
    <property type="entry name" value="SEPTUM SITE-DETERMINING PROTEIN MINC"/>
    <property type="match status" value="1"/>
</dbReference>
<dbReference type="PANTHER" id="PTHR34108:SF1">
    <property type="entry name" value="SEPTUM SITE-DETERMINING PROTEIN MINC"/>
    <property type="match status" value="1"/>
</dbReference>
<dbReference type="Pfam" id="PF03775">
    <property type="entry name" value="MinC_C"/>
    <property type="match status" value="1"/>
</dbReference>
<dbReference type="Pfam" id="PF05209">
    <property type="entry name" value="MinC_N"/>
    <property type="match status" value="1"/>
</dbReference>
<dbReference type="SUPFAM" id="SSF63848">
    <property type="entry name" value="Cell-division inhibitor MinC, C-terminal domain"/>
    <property type="match status" value="1"/>
</dbReference>
<comment type="function">
    <text evidence="1">Cell division inhibitor that blocks the formation of polar Z ring septums. Rapidly oscillates between the poles of the cell to destabilize FtsZ filaments that have formed before they mature into polar Z rings. Prevents FtsZ polymerization.</text>
</comment>
<comment type="subunit">
    <text evidence="1">Interacts with MinD and FtsZ.</text>
</comment>
<comment type="similarity">
    <text evidence="1">Belongs to the MinC family.</text>
</comment>
<accession>Q0BHH1</accession>
<name>MINC_BURCM</name>
<organism>
    <name type="scientific">Burkholderia ambifaria (strain ATCC BAA-244 / DSM 16087 / CCUG 44356 / LMG 19182 / AMMD)</name>
    <name type="common">Burkholderia cepacia (strain AMMD)</name>
    <dbReference type="NCBI Taxonomy" id="339670"/>
    <lineage>
        <taxon>Bacteria</taxon>
        <taxon>Pseudomonadati</taxon>
        <taxon>Pseudomonadota</taxon>
        <taxon>Betaproteobacteria</taxon>
        <taxon>Burkholderiales</taxon>
        <taxon>Burkholderiaceae</taxon>
        <taxon>Burkholderia</taxon>
        <taxon>Burkholderia cepacia complex</taxon>
    </lineage>
</organism>